<dbReference type="EMBL" id="AE000783">
    <property type="status" value="NOT_ANNOTATED_CDS"/>
    <property type="molecule type" value="Genomic_DNA"/>
</dbReference>
<dbReference type="PIR" id="B70166">
    <property type="entry name" value="B70166"/>
</dbReference>
<dbReference type="RefSeq" id="WP_023591459.1">
    <property type="nucleotide sequence ID" value="NC_001318.1"/>
</dbReference>
<dbReference type="RefSeq" id="YP_008853941.1">
    <property type="nucleotide sequence ID" value="NC_001318.1"/>
</dbReference>
<dbReference type="PATRIC" id="fig|224326.49.peg.921"/>
<dbReference type="OrthoDB" id="9763643at2"/>
<dbReference type="Proteomes" id="UP000001807">
    <property type="component" value="Chromosome"/>
</dbReference>
<dbReference type="GO" id="GO:0004040">
    <property type="term" value="F:amidase activity"/>
    <property type="evidence" value="ECO:0007669"/>
    <property type="project" value="InterPro"/>
</dbReference>
<dbReference type="Gene3D" id="1.10.530.10">
    <property type="match status" value="1"/>
</dbReference>
<dbReference type="InterPro" id="IPR002901">
    <property type="entry name" value="MGlyc_endo_b_GlcNAc-like_dom"/>
</dbReference>
<dbReference type="Pfam" id="PF01832">
    <property type="entry name" value="Glucosaminidase"/>
    <property type="match status" value="1"/>
</dbReference>
<feature type="signal peptide" evidence="1">
    <location>
        <begin position="1"/>
        <end position="21"/>
    </location>
</feature>
<feature type="chain" id="PRO_0000013750" description="Uncharacterized protein BB_0531">
    <location>
        <begin position="22"/>
        <end position="204"/>
    </location>
</feature>
<sequence>MIKKFLLFAMLNIFLTNKAHSNEEIIEISTEIQKEKYIPFLISRGKTQLEDLVKYTLEINPELDKNYVNTVAKTYIDESLIEGVNYDIAYAQMLLETGALKFNGIVSKEQHNFSXIGATNNLTKGNSFSNITEGIKAHIQHLKAYASKQNIKSNMVDPRFYLVKRGSAPTIYDLTGKWAKDKLYDKKLKKILLELLEYNNANKS</sequence>
<keyword id="KW-1185">Reference proteome</keyword>
<keyword id="KW-0732">Signal</keyword>
<accession>O51481</accession>
<protein>
    <recommendedName>
        <fullName>Uncharacterized protein BB_0531</fullName>
    </recommendedName>
</protein>
<proteinExistence type="inferred from homology"/>
<evidence type="ECO:0000255" key="1"/>
<organism>
    <name type="scientific">Borreliella burgdorferi (strain ATCC 35210 / DSM 4680 / CIP 102532 / B31)</name>
    <name type="common">Borrelia burgdorferi</name>
    <dbReference type="NCBI Taxonomy" id="224326"/>
    <lineage>
        <taxon>Bacteria</taxon>
        <taxon>Pseudomonadati</taxon>
        <taxon>Spirochaetota</taxon>
        <taxon>Spirochaetia</taxon>
        <taxon>Spirochaetales</taxon>
        <taxon>Borreliaceae</taxon>
        <taxon>Borreliella</taxon>
    </lineage>
</organism>
<reference key="1">
    <citation type="journal article" date="1997" name="Nature">
        <title>Genomic sequence of a Lyme disease spirochaete, Borrelia burgdorferi.</title>
        <authorList>
            <person name="Fraser C.M."/>
            <person name="Casjens S."/>
            <person name="Huang W.M."/>
            <person name="Sutton G.G."/>
            <person name="Clayton R.A."/>
            <person name="Lathigra R."/>
            <person name="White O."/>
            <person name="Ketchum K.A."/>
            <person name="Dodson R.J."/>
            <person name="Hickey E.K."/>
            <person name="Gwinn M.L."/>
            <person name="Dougherty B.A."/>
            <person name="Tomb J.-F."/>
            <person name="Fleischmann R.D."/>
            <person name="Richardson D.L."/>
            <person name="Peterson J.D."/>
            <person name="Kerlavage A.R."/>
            <person name="Quackenbush J."/>
            <person name="Salzberg S.L."/>
            <person name="Hanson M."/>
            <person name="van Vugt R."/>
            <person name="Palmer N."/>
            <person name="Adams M.D."/>
            <person name="Gocayne J.D."/>
            <person name="Weidman J.F."/>
            <person name="Utterback T.R."/>
            <person name="Watthey L."/>
            <person name="McDonald L.A."/>
            <person name="Artiach P."/>
            <person name="Bowman C."/>
            <person name="Garland S.A."/>
            <person name="Fujii C."/>
            <person name="Cotton M.D."/>
            <person name="Horst K."/>
            <person name="Roberts K.M."/>
            <person name="Hatch B."/>
            <person name="Smith H.O."/>
            <person name="Venter J.C."/>
        </authorList>
    </citation>
    <scope>NUCLEOTIDE SEQUENCE [LARGE SCALE GENOMIC DNA]</scope>
    <source>
        <strain>ATCC 35210 / DSM 4680 / CIP 102532 / B31</strain>
    </source>
</reference>
<name>Y531_BORBU</name>
<gene>
    <name type="ordered locus">BB_0531</name>
</gene>